<protein>
    <recommendedName>
        <fullName>Plant intracellular Ras-group-related LRR protein 1</fullName>
    </recommendedName>
    <alternativeName>
        <fullName>Intracellular Ras-group-related LRR protein 1</fullName>
        <shortName>OsIRL1</shortName>
    </alternativeName>
</protein>
<dbReference type="EMBL" id="AL662996">
    <property type="protein sequence ID" value="CAE03882.2"/>
    <property type="molecule type" value="Genomic_DNA"/>
</dbReference>
<dbReference type="EMBL" id="AP008210">
    <property type="protein sequence ID" value="BAF15708.1"/>
    <property type="molecule type" value="Genomic_DNA"/>
</dbReference>
<dbReference type="EMBL" id="AP014960">
    <property type="protein sequence ID" value="BAS90882.1"/>
    <property type="molecule type" value="Genomic_DNA"/>
</dbReference>
<dbReference type="EMBL" id="CM000141">
    <property type="protein sequence ID" value="EAZ31902.1"/>
    <property type="molecule type" value="Genomic_DNA"/>
</dbReference>
<dbReference type="EMBL" id="AK061732">
    <property type="protein sequence ID" value="BAG88076.1"/>
    <property type="molecule type" value="mRNA"/>
</dbReference>
<dbReference type="EMBL" id="AK066546">
    <property type="protein sequence ID" value="BAG90023.1"/>
    <property type="molecule type" value="mRNA"/>
</dbReference>
<dbReference type="EMBL" id="AK104574">
    <property type="protein sequence ID" value="BAG96799.1"/>
    <property type="molecule type" value="mRNA"/>
</dbReference>
<dbReference type="RefSeq" id="XP_015636867.1">
    <property type="nucleotide sequence ID" value="XM_015781381.1"/>
</dbReference>
<dbReference type="SMR" id="Q7XNY1"/>
<dbReference type="FunCoup" id="Q7XNY1">
    <property type="interactions" value="737"/>
</dbReference>
<dbReference type="STRING" id="39947.Q7XNY1"/>
<dbReference type="PaxDb" id="39947-Q7XNY1"/>
<dbReference type="EnsemblPlants" id="Os04t0605300-01">
    <property type="protein sequence ID" value="Os04t0605300-01"/>
    <property type="gene ID" value="Os04g0605300"/>
</dbReference>
<dbReference type="EnsemblPlants" id="Os04t0605300-02">
    <property type="protein sequence ID" value="Os04t0605300-02"/>
    <property type="gene ID" value="Os04g0605300"/>
</dbReference>
<dbReference type="Gramene" id="Os04t0605300-01">
    <property type="protein sequence ID" value="Os04t0605300-01"/>
    <property type="gene ID" value="Os04g0605300"/>
</dbReference>
<dbReference type="Gramene" id="Os04t0605300-02">
    <property type="protein sequence ID" value="Os04t0605300-02"/>
    <property type="gene ID" value="Os04g0605300"/>
</dbReference>
<dbReference type="KEGG" id="dosa:Os04g0605300"/>
<dbReference type="eggNOG" id="KOG0619">
    <property type="taxonomic scope" value="Eukaryota"/>
</dbReference>
<dbReference type="HOGENOM" id="CLU_000288_18_0_1"/>
<dbReference type="InParanoid" id="Q7XNY1"/>
<dbReference type="OMA" id="MVKCGTF"/>
<dbReference type="OrthoDB" id="1668230at2759"/>
<dbReference type="Proteomes" id="UP000000763">
    <property type="component" value="Chromosome 4"/>
</dbReference>
<dbReference type="Proteomes" id="UP000007752">
    <property type="component" value="Chromosome 4"/>
</dbReference>
<dbReference type="Proteomes" id="UP000059680">
    <property type="component" value="Chromosome 4"/>
</dbReference>
<dbReference type="GO" id="GO:0035556">
    <property type="term" value="P:intracellular signal transduction"/>
    <property type="evidence" value="ECO:0000318"/>
    <property type="project" value="GO_Central"/>
</dbReference>
<dbReference type="Gene3D" id="3.80.10.10">
    <property type="entry name" value="Ribonuclease Inhibitor"/>
    <property type="match status" value="2"/>
</dbReference>
<dbReference type="InterPro" id="IPR001611">
    <property type="entry name" value="Leu-rich_rpt"/>
</dbReference>
<dbReference type="InterPro" id="IPR003591">
    <property type="entry name" value="Leu-rich_rpt_typical-subtyp"/>
</dbReference>
<dbReference type="InterPro" id="IPR032675">
    <property type="entry name" value="LRR_dom_sf"/>
</dbReference>
<dbReference type="InterPro" id="IPR050216">
    <property type="entry name" value="LRR_domain-containing"/>
</dbReference>
<dbReference type="PANTHER" id="PTHR48051">
    <property type="match status" value="1"/>
</dbReference>
<dbReference type="PANTHER" id="PTHR48051:SF1">
    <property type="entry name" value="RAS SUPPRESSOR PROTEIN 1"/>
    <property type="match status" value="1"/>
</dbReference>
<dbReference type="Pfam" id="PF00560">
    <property type="entry name" value="LRR_1"/>
    <property type="match status" value="1"/>
</dbReference>
<dbReference type="Pfam" id="PF13855">
    <property type="entry name" value="LRR_8"/>
    <property type="match status" value="1"/>
</dbReference>
<dbReference type="PRINTS" id="PR00019">
    <property type="entry name" value="LEURICHRPT"/>
</dbReference>
<dbReference type="SMART" id="SM00364">
    <property type="entry name" value="LRR_BAC"/>
    <property type="match status" value="7"/>
</dbReference>
<dbReference type="SMART" id="SM00369">
    <property type="entry name" value="LRR_TYP"/>
    <property type="match status" value="7"/>
</dbReference>
<dbReference type="SUPFAM" id="SSF52058">
    <property type="entry name" value="L domain-like"/>
    <property type="match status" value="1"/>
</dbReference>
<dbReference type="PROSITE" id="PS51450">
    <property type="entry name" value="LRR"/>
    <property type="match status" value="8"/>
</dbReference>
<comment type="function">
    <text evidence="1">Leucine-rich repeat protein that likely mediates protein interactions, possibly in the context of signal transduction.</text>
</comment>
<comment type="tissue specificity">
    <text evidence="3">Widely expressed but at a lower level in seedlings and stems.</text>
</comment>
<comment type="disruption phenotype">
    <text evidence="3">Late flowering.</text>
</comment>
<comment type="similarity">
    <text evidence="4">Belongs to the SHOC2 family.</text>
</comment>
<gene>
    <name type="primary">IRL1</name>
    <name type="ordered locus">Os04g0605300</name>
    <name type="ordered locus">LOC_Os04g51580</name>
    <name type="ORF">OsJ_16067</name>
    <name type="ORF">OSJNBb0015N08.10</name>
</gene>
<reference key="1">
    <citation type="journal article" date="2002" name="Nature">
        <title>Sequence and analysis of rice chromosome 4.</title>
        <authorList>
            <person name="Feng Q."/>
            <person name="Zhang Y."/>
            <person name="Hao P."/>
            <person name="Wang S."/>
            <person name="Fu G."/>
            <person name="Huang Y."/>
            <person name="Li Y."/>
            <person name="Zhu J."/>
            <person name="Liu Y."/>
            <person name="Hu X."/>
            <person name="Jia P."/>
            <person name="Zhang Y."/>
            <person name="Zhao Q."/>
            <person name="Ying K."/>
            <person name="Yu S."/>
            <person name="Tang Y."/>
            <person name="Weng Q."/>
            <person name="Zhang L."/>
            <person name="Lu Y."/>
            <person name="Mu J."/>
            <person name="Lu Y."/>
            <person name="Zhang L.S."/>
            <person name="Yu Z."/>
            <person name="Fan D."/>
            <person name="Liu X."/>
            <person name="Lu T."/>
            <person name="Li C."/>
            <person name="Wu Y."/>
            <person name="Sun T."/>
            <person name="Lei H."/>
            <person name="Li T."/>
            <person name="Hu H."/>
            <person name="Guan J."/>
            <person name="Wu M."/>
            <person name="Zhang R."/>
            <person name="Zhou B."/>
            <person name="Chen Z."/>
            <person name="Chen L."/>
            <person name="Jin Z."/>
            <person name="Wang R."/>
            <person name="Yin H."/>
            <person name="Cai Z."/>
            <person name="Ren S."/>
            <person name="Lv G."/>
            <person name="Gu W."/>
            <person name="Zhu G."/>
            <person name="Tu Y."/>
            <person name="Jia J."/>
            <person name="Zhang Y."/>
            <person name="Chen J."/>
            <person name="Kang H."/>
            <person name="Chen X."/>
            <person name="Shao C."/>
            <person name="Sun Y."/>
            <person name="Hu Q."/>
            <person name="Zhang X."/>
            <person name="Zhang W."/>
            <person name="Wang L."/>
            <person name="Ding C."/>
            <person name="Sheng H."/>
            <person name="Gu J."/>
            <person name="Chen S."/>
            <person name="Ni L."/>
            <person name="Zhu F."/>
            <person name="Chen W."/>
            <person name="Lan L."/>
            <person name="Lai Y."/>
            <person name="Cheng Z."/>
            <person name="Gu M."/>
            <person name="Jiang J."/>
            <person name="Li J."/>
            <person name="Hong G."/>
            <person name="Xue Y."/>
            <person name="Han B."/>
        </authorList>
    </citation>
    <scope>NUCLEOTIDE SEQUENCE [LARGE SCALE GENOMIC DNA]</scope>
    <source>
        <strain>cv. Nipponbare</strain>
    </source>
</reference>
<reference key="2">
    <citation type="journal article" date="2005" name="Nature">
        <title>The map-based sequence of the rice genome.</title>
        <authorList>
            <consortium name="International rice genome sequencing project (IRGSP)"/>
        </authorList>
    </citation>
    <scope>NUCLEOTIDE SEQUENCE [LARGE SCALE GENOMIC DNA]</scope>
    <source>
        <strain>cv. Nipponbare</strain>
    </source>
</reference>
<reference key="3">
    <citation type="journal article" date="2008" name="Nucleic Acids Res.">
        <title>The rice annotation project database (RAP-DB): 2008 update.</title>
        <authorList>
            <consortium name="The rice annotation project (RAP)"/>
        </authorList>
    </citation>
    <scope>GENOME REANNOTATION</scope>
    <source>
        <strain>cv. Nipponbare</strain>
    </source>
</reference>
<reference key="4">
    <citation type="journal article" date="2013" name="Rice">
        <title>Improvement of the Oryza sativa Nipponbare reference genome using next generation sequence and optical map data.</title>
        <authorList>
            <person name="Kawahara Y."/>
            <person name="de la Bastide M."/>
            <person name="Hamilton J.P."/>
            <person name="Kanamori H."/>
            <person name="McCombie W.R."/>
            <person name="Ouyang S."/>
            <person name="Schwartz D.C."/>
            <person name="Tanaka T."/>
            <person name="Wu J."/>
            <person name="Zhou S."/>
            <person name="Childs K.L."/>
            <person name="Davidson R.M."/>
            <person name="Lin H."/>
            <person name="Quesada-Ocampo L."/>
            <person name="Vaillancourt B."/>
            <person name="Sakai H."/>
            <person name="Lee S.S."/>
            <person name="Kim J."/>
            <person name="Numa H."/>
            <person name="Itoh T."/>
            <person name="Buell C.R."/>
            <person name="Matsumoto T."/>
        </authorList>
    </citation>
    <scope>GENOME REANNOTATION</scope>
    <source>
        <strain>cv. Nipponbare</strain>
    </source>
</reference>
<reference key="5">
    <citation type="journal article" date="2005" name="PLoS Biol.">
        <title>The genomes of Oryza sativa: a history of duplications.</title>
        <authorList>
            <person name="Yu J."/>
            <person name="Wang J."/>
            <person name="Lin W."/>
            <person name="Li S."/>
            <person name="Li H."/>
            <person name="Zhou J."/>
            <person name="Ni P."/>
            <person name="Dong W."/>
            <person name="Hu S."/>
            <person name="Zeng C."/>
            <person name="Zhang J."/>
            <person name="Zhang Y."/>
            <person name="Li R."/>
            <person name="Xu Z."/>
            <person name="Li S."/>
            <person name="Li X."/>
            <person name="Zheng H."/>
            <person name="Cong L."/>
            <person name="Lin L."/>
            <person name="Yin J."/>
            <person name="Geng J."/>
            <person name="Li G."/>
            <person name="Shi J."/>
            <person name="Liu J."/>
            <person name="Lv H."/>
            <person name="Li J."/>
            <person name="Wang J."/>
            <person name="Deng Y."/>
            <person name="Ran L."/>
            <person name="Shi X."/>
            <person name="Wang X."/>
            <person name="Wu Q."/>
            <person name="Li C."/>
            <person name="Ren X."/>
            <person name="Wang J."/>
            <person name="Wang X."/>
            <person name="Li D."/>
            <person name="Liu D."/>
            <person name="Zhang X."/>
            <person name="Ji Z."/>
            <person name="Zhao W."/>
            <person name="Sun Y."/>
            <person name="Zhang Z."/>
            <person name="Bao J."/>
            <person name="Han Y."/>
            <person name="Dong L."/>
            <person name="Ji J."/>
            <person name="Chen P."/>
            <person name="Wu S."/>
            <person name="Liu J."/>
            <person name="Xiao Y."/>
            <person name="Bu D."/>
            <person name="Tan J."/>
            <person name="Yang L."/>
            <person name="Ye C."/>
            <person name="Zhang J."/>
            <person name="Xu J."/>
            <person name="Zhou Y."/>
            <person name="Yu Y."/>
            <person name="Zhang B."/>
            <person name="Zhuang S."/>
            <person name="Wei H."/>
            <person name="Liu B."/>
            <person name="Lei M."/>
            <person name="Yu H."/>
            <person name="Li Y."/>
            <person name="Xu H."/>
            <person name="Wei S."/>
            <person name="He X."/>
            <person name="Fang L."/>
            <person name="Zhang Z."/>
            <person name="Zhang Y."/>
            <person name="Huang X."/>
            <person name="Su Z."/>
            <person name="Tong W."/>
            <person name="Li J."/>
            <person name="Tong Z."/>
            <person name="Li S."/>
            <person name="Ye J."/>
            <person name="Wang L."/>
            <person name="Fang L."/>
            <person name="Lei T."/>
            <person name="Chen C.-S."/>
            <person name="Chen H.-C."/>
            <person name="Xu Z."/>
            <person name="Li H."/>
            <person name="Huang H."/>
            <person name="Zhang F."/>
            <person name="Xu H."/>
            <person name="Li N."/>
            <person name="Zhao C."/>
            <person name="Li S."/>
            <person name="Dong L."/>
            <person name="Huang Y."/>
            <person name="Li L."/>
            <person name="Xi Y."/>
            <person name="Qi Q."/>
            <person name="Li W."/>
            <person name="Zhang B."/>
            <person name="Hu W."/>
            <person name="Zhang Y."/>
            <person name="Tian X."/>
            <person name="Jiao Y."/>
            <person name="Liang X."/>
            <person name="Jin J."/>
            <person name="Gao L."/>
            <person name="Zheng W."/>
            <person name="Hao B."/>
            <person name="Liu S.-M."/>
            <person name="Wang W."/>
            <person name="Yuan L."/>
            <person name="Cao M."/>
            <person name="McDermott J."/>
            <person name="Samudrala R."/>
            <person name="Wang J."/>
            <person name="Wong G.K.-S."/>
            <person name="Yang H."/>
        </authorList>
    </citation>
    <scope>NUCLEOTIDE SEQUENCE [LARGE SCALE GENOMIC DNA]</scope>
    <source>
        <strain>cv. Nipponbare</strain>
    </source>
</reference>
<reference key="6">
    <citation type="journal article" date="2003" name="Science">
        <title>Collection, mapping, and annotation of over 28,000 cDNA clones from japonica rice.</title>
        <authorList>
            <consortium name="The rice full-length cDNA consortium"/>
        </authorList>
    </citation>
    <scope>NUCLEOTIDE SEQUENCE [LARGE SCALE MRNA]</scope>
    <source>
        <strain>cv. Nipponbare</strain>
    </source>
</reference>
<reference key="7">
    <citation type="journal article" date="2010" name="Plant Mol. Biol.">
        <title>Molecular characterization, expression pattern, and functional analysis of the OsIRL gene family encoding intracellular Ras-group-related LRR proteins in rice.</title>
        <authorList>
            <person name="You C."/>
            <person name="Dai X."/>
            <person name="Li X."/>
            <person name="Wang L."/>
            <person name="Chen G."/>
            <person name="Xiao J."/>
            <person name="Wu C."/>
        </authorList>
    </citation>
    <scope>GENE FAMILY</scope>
    <scope>MOTIF GVYW</scope>
    <scope>TISSUE SPECIFICITY</scope>
    <scope>DISRUPTION PHENOTYPE</scope>
</reference>
<proteinExistence type="evidence at transcript level"/>
<name>PIRL1_ORYSJ</name>
<keyword id="KW-0433">Leucine-rich repeat</keyword>
<keyword id="KW-1185">Reference proteome</keyword>
<keyword id="KW-0677">Repeat</keyword>
<accession>Q7XNY1</accession>
<accession>A0A0P0WEU5</accession>
<feature type="chain" id="PRO_0000423610" description="Plant intracellular Ras-group-related LRR protein 1">
    <location>
        <begin position="1"/>
        <end position="352"/>
    </location>
</feature>
<feature type="repeat" description="LRR 1">
    <location>
        <begin position="29"/>
        <end position="52"/>
    </location>
</feature>
<feature type="repeat" description="LRR 2">
    <location>
        <begin position="53"/>
        <end position="75"/>
    </location>
</feature>
<feature type="repeat" description="LRR 3">
    <location>
        <begin position="77"/>
        <end position="99"/>
    </location>
</feature>
<feature type="repeat" description="LRR 4">
    <location>
        <begin position="100"/>
        <end position="122"/>
    </location>
</feature>
<feature type="repeat" description="LRR 5">
    <location>
        <begin position="124"/>
        <end position="146"/>
    </location>
</feature>
<feature type="repeat" description="LRR 6">
    <location>
        <begin position="147"/>
        <end position="169"/>
    </location>
</feature>
<feature type="repeat" description="LRR 7">
    <location>
        <begin position="171"/>
        <end position="192"/>
    </location>
</feature>
<feature type="repeat" description="LRR 8">
    <location>
        <begin position="195"/>
        <end position="217"/>
    </location>
</feature>
<feature type="repeat" description="LRR 9">
    <location>
        <begin position="218"/>
        <end position="241"/>
    </location>
</feature>
<feature type="repeat" description="LRR 10">
    <location>
        <begin position="243"/>
        <end position="263"/>
    </location>
</feature>
<feature type="region of interest" description="Disordered" evidence="2">
    <location>
        <begin position="1"/>
        <end position="25"/>
    </location>
</feature>
<feature type="short sequence motif" description="GVYW; degenerate">
    <location>
        <begin position="264"/>
        <end position="271"/>
    </location>
</feature>
<sequence>MREMGEKRRRGHLNPAGFAGGLHDHEEKKNEEHKLDMSGMSMDALPHLTMSLGQVTILDLSNNNLESIPESIIARLLNVVVLDVRSNQLKSLPNSIGCLSKLKVLNVSGNLLESLPNTIEECRALEELHANFNELTKLPDTLGFELHSLRKLSVNSNKLAQLPSSTSHMTALRALDARLNCLRALPDGLENLANLEALNVSQNFQFLRELPYAVGLLASLRELDVSYNSIAALPDSMGCLTKLARFSAVGNPLVSPPMDVVEQGLDAMRAYLTARMNGGDGKRKKKAWLPKLVKYSTFTARMTPGRTRVHENTEGLLMSDYRSLNGIASPRFLTMLSPRRLFSPRRNSPKHC</sequence>
<evidence type="ECO:0000250" key="1"/>
<evidence type="ECO:0000256" key="2">
    <source>
        <dbReference type="SAM" id="MobiDB-lite"/>
    </source>
</evidence>
<evidence type="ECO:0000269" key="3">
    <source>
    </source>
</evidence>
<evidence type="ECO:0000305" key="4"/>
<organism>
    <name type="scientific">Oryza sativa subsp. japonica</name>
    <name type="common">Rice</name>
    <dbReference type="NCBI Taxonomy" id="39947"/>
    <lineage>
        <taxon>Eukaryota</taxon>
        <taxon>Viridiplantae</taxon>
        <taxon>Streptophyta</taxon>
        <taxon>Embryophyta</taxon>
        <taxon>Tracheophyta</taxon>
        <taxon>Spermatophyta</taxon>
        <taxon>Magnoliopsida</taxon>
        <taxon>Liliopsida</taxon>
        <taxon>Poales</taxon>
        <taxon>Poaceae</taxon>
        <taxon>BOP clade</taxon>
        <taxon>Oryzoideae</taxon>
        <taxon>Oryzeae</taxon>
        <taxon>Oryzinae</taxon>
        <taxon>Oryza</taxon>
        <taxon>Oryza sativa</taxon>
    </lineage>
</organism>